<feature type="chain" id="PRO_1000096155" description="Elongation factor P">
    <location>
        <begin position="1"/>
        <end position="188"/>
    </location>
</feature>
<comment type="function">
    <text evidence="1">Involved in peptide bond synthesis. Stimulates efficient translation and peptide-bond synthesis on native or reconstituted 70S ribosomes in vitro. Probably functions indirectly by altering the affinity of the ribosome for aminoacyl-tRNA, thus increasing their reactivity as acceptors for peptidyl transferase.</text>
</comment>
<comment type="pathway">
    <text evidence="1">Protein biosynthesis; polypeptide chain elongation.</text>
</comment>
<comment type="subcellular location">
    <subcellularLocation>
        <location evidence="1">Cytoplasm</location>
    </subcellularLocation>
</comment>
<comment type="similarity">
    <text evidence="1">Belongs to the elongation factor P family.</text>
</comment>
<protein>
    <recommendedName>
        <fullName evidence="1">Elongation factor P</fullName>
        <shortName evidence="1">EF-P</shortName>
    </recommendedName>
</protein>
<sequence length="188" mass="21042">MVSVNDLKTGLTIKTSDGMIWQVLEFQHVKPGKGAAFVRTKMRNIRNGNIQEMTFRGGERVERAHIERNKMQYLYPMGETYVFMDTESYEQLELTTAQVEAALPFLLENMEVQIAIYNGEVLGIELPNTIVMTIVEAEPGVKGDTASNVKKNATVETGHIIHVPLFIEAGEKVTVDTRTGDFTGRYNG</sequence>
<accession>B1YLP7</accession>
<keyword id="KW-0963">Cytoplasm</keyword>
<keyword id="KW-0251">Elongation factor</keyword>
<keyword id="KW-0648">Protein biosynthesis</keyword>
<keyword id="KW-1185">Reference proteome</keyword>
<reference key="1">
    <citation type="submission" date="2008-04" db="EMBL/GenBank/DDBJ databases">
        <title>Complete sequence of chromosome of Exiguobacterium sibiricum 255-15.</title>
        <authorList>
            <consortium name="US DOE Joint Genome Institute"/>
            <person name="Copeland A."/>
            <person name="Lucas S."/>
            <person name="Lapidus A."/>
            <person name="Glavina del Rio T."/>
            <person name="Dalin E."/>
            <person name="Tice H."/>
            <person name="Bruce D."/>
            <person name="Goodwin L."/>
            <person name="Pitluck S."/>
            <person name="Kiss H."/>
            <person name="Chertkov O."/>
            <person name="Monk C."/>
            <person name="Brettin T."/>
            <person name="Detter J.C."/>
            <person name="Han C."/>
            <person name="Kuske C.R."/>
            <person name="Schmutz J."/>
            <person name="Larimer F."/>
            <person name="Land M."/>
            <person name="Hauser L."/>
            <person name="Kyrpides N."/>
            <person name="Mikhailova N."/>
            <person name="Vishnivetskaya T."/>
            <person name="Rodrigues D.F."/>
            <person name="Gilichinsky D."/>
            <person name="Tiedje J."/>
            <person name="Richardson P."/>
        </authorList>
    </citation>
    <scope>NUCLEOTIDE SEQUENCE [LARGE SCALE GENOMIC DNA]</scope>
    <source>
        <strain>DSM 17290 / CCUG 55495 / CIP 109462 / JCM 13490 / 255-15</strain>
    </source>
</reference>
<evidence type="ECO:0000255" key="1">
    <source>
        <dbReference type="HAMAP-Rule" id="MF_00141"/>
    </source>
</evidence>
<gene>
    <name evidence="1" type="primary">efp</name>
    <name type="ordered locus">Exig_0900</name>
</gene>
<organism>
    <name type="scientific">Exiguobacterium sibiricum (strain DSM 17290 / CCUG 55495 / CIP 109462 / JCM 13490 / 255-15)</name>
    <dbReference type="NCBI Taxonomy" id="262543"/>
    <lineage>
        <taxon>Bacteria</taxon>
        <taxon>Bacillati</taxon>
        <taxon>Bacillota</taxon>
        <taxon>Bacilli</taxon>
        <taxon>Bacillales</taxon>
        <taxon>Bacillales Family XII. Incertae Sedis</taxon>
        <taxon>Exiguobacterium</taxon>
    </lineage>
</organism>
<name>EFP_EXIS2</name>
<proteinExistence type="inferred from homology"/>
<dbReference type="EMBL" id="CP001022">
    <property type="protein sequence ID" value="ACB60380.1"/>
    <property type="molecule type" value="Genomic_DNA"/>
</dbReference>
<dbReference type="RefSeq" id="WP_012369804.1">
    <property type="nucleotide sequence ID" value="NC_010556.1"/>
</dbReference>
<dbReference type="SMR" id="B1YLP7"/>
<dbReference type="STRING" id="262543.Exig_0900"/>
<dbReference type="KEGG" id="esi:Exig_0900"/>
<dbReference type="eggNOG" id="COG0231">
    <property type="taxonomic scope" value="Bacteria"/>
</dbReference>
<dbReference type="HOGENOM" id="CLU_074944_0_1_9"/>
<dbReference type="OrthoDB" id="9801844at2"/>
<dbReference type="UniPathway" id="UPA00345"/>
<dbReference type="Proteomes" id="UP000001681">
    <property type="component" value="Chromosome"/>
</dbReference>
<dbReference type="GO" id="GO:0005737">
    <property type="term" value="C:cytoplasm"/>
    <property type="evidence" value="ECO:0007669"/>
    <property type="project" value="UniProtKB-SubCell"/>
</dbReference>
<dbReference type="GO" id="GO:0003746">
    <property type="term" value="F:translation elongation factor activity"/>
    <property type="evidence" value="ECO:0007669"/>
    <property type="project" value="UniProtKB-UniRule"/>
</dbReference>
<dbReference type="GO" id="GO:0043043">
    <property type="term" value="P:peptide biosynthetic process"/>
    <property type="evidence" value="ECO:0007669"/>
    <property type="project" value="InterPro"/>
</dbReference>
<dbReference type="CDD" id="cd04470">
    <property type="entry name" value="S1_EF-P_repeat_1"/>
    <property type="match status" value="1"/>
</dbReference>
<dbReference type="CDD" id="cd05794">
    <property type="entry name" value="S1_EF-P_repeat_2"/>
    <property type="match status" value="1"/>
</dbReference>
<dbReference type="FunFam" id="2.30.30.30:FF:000003">
    <property type="entry name" value="Elongation factor P"/>
    <property type="match status" value="1"/>
</dbReference>
<dbReference type="FunFam" id="2.40.50.140:FF:000004">
    <property type="entry name" value="Elongation factor P"/>
    <property type="match status" value="1"/>
</dbReference>
<dbReference type="FunFam" id="2.40.50.140:FF:000009">
    <property type="entry name" value="Elongation factor P"/>
    <property type="match status" value="1"/>
</dbReference>
<dbReference type="Gene3D" id="2.30.30.30">
    <property type="match status" value="1"/>
</dbReference>
<dbReference type="Gene3D" id="2.40.50.140">
    <property type="entry name" value="Nucleic acid-binding proteins"/>
    <property type="match status" value="2"/>
</dbReference>
<dbReference type="HAMAP" id="MF_00141">
    <property type="entry name" value="EF_P"/>
    <property type="match status" value="1"/>
</dbReference>
<dbReference type="InterPro" id="IPR015365">
    <property type="entry name" value="Elong-fact-P_C"/>
</dbReference>
<dbReference type="InterPro" id="IPR012340">
    <property type="entry name" value="NA-bd_OB-fold"/>
</dbReference>
<dbReference type="InterPro" id="IPR014722">
    <property type="entry name" value="Rib_uL2_dom2"/>
</dbReference>
<dbReference type="InterPro" id="IPR020599">
    <property type="entry name" value="Transl_elong_fac_P/YeiP"/>
</dbReference>
<dbReference type="InterPro" id="IPR013185">
    <property type="entry name" value="Transl_elong_KOW-like"/>
</dbReference>
<dbReference type="InterPro" id="IPR001059">
    <property type="entry name" value="Transl_elong_P/YeiP_cen"/>
</dbReference>
<dbReference type="InterPro" id="IPR013852">
    <property type="entry name" value="Transl_elong_P/YeiP_CS"/>
</dbReference>
<dbReference type="InterPro" id="IPR011768">
    <property type="entry name" value="Transl_elongation_fac_P"/>
</dbReference>
<dbReference type="InterPro" id="IPR008991">
    <property type="entry name" value="Translation_prot_SH3-like_sf"/>
</dbReference>
<dbReference type="NCBIfam" id="TIGR00038">
    <property type="entry name" value="efp"/>
    <property type="match status" value="1"/>
</dbReference>
<dbReference type="NCBIfam" id="NF001810">
    <property type="entry name" value="PRK00529.1"/>
    <property type="match status" value="1"/>
</dbReference>
<dbReference type="PANTHER" id="PTHR30053">
    <property type="entry name" value="ELONGATION FACTOR P"/>
    <property type="match status" value="1"/>
</dbReference>
<dbReference type="PANTHER" id="PTHR30053:SF12">
    <property type="entry name" value="ELONGATION FACTOR P (EF-P) FAMILY PROTEIN"/>
    <property type="match status" value="1"/>
</dbReference>
<dbReference type="Pfam" id="PF01132">
    <property type="entry name" value="EFP"/>
    <property type="match status" value="1"/>
</dbReference>
<dbReference type="Pfam" id="PF08207">
    <property type="entry name" value="EFP_N"/>
    <property type="match status" value="1"/>
</dbReference>
<dbReference type="Pfam" id="PF09285">
    <property type="entry name" value="Elong-fact-P_C"/>
    <property type="match status" value="1"/>
</dbReference>
<dbReference type="PIRSF" id="PIRSF005901">
    <property type="entry name" value="EF-P"/>
    <property type="match status" value="1"/>
</dbReference>
<dbReference type="SMART" id="SM01185">
    <property type="entry name" value="EFP"/>
    <property type="match status" value="1"/>
</dbReference>
<dbReference type="SMART" id="SM00841">
    <property type="entry name" value="Elong-fact-P_C"/>
    <property type="match status" value="1"/>
</dbReference>
<dbReference type="SUPFAM" id="SSF50249">
    <property type="entry name" value="Nucleic acid-binding proteins"/>
    <property type="match status" value="2"/>
</dbReference>
<dbReference type="SUPFAM" id="SSF50104">
    <property type="entry name" value="Translation proteins SH3-like domain"/>
    <property type="match status" value="1"/>
</dbReference>
<dbReference type="PROSITE" id="PS01275">
    <property type="entry name" value="EFP"/>
    <property type="match status" value="1"/>
</dbReference>